<proteinExistence type="inferred from homology"/>
<reference key="1">
    <citation type="journal article" date="2003" name="Mol. Biol. Evol.">
        <title>Analysis of the Amborella trichopoda chloroplast genome sequence suggests that Amborella is not a basal angiosperm.</title>
        <authorList>
            <person name="Goremykin V.V."/>
            <person name="Hirsch-Ernst K.I."/>
            <person name="Wolfl S."/>
            <person name="Hellwig F.H."/>
        </authorList>
    </citation>
    <scope>NUCLEOTIDE SEQUENCE [LARGE SCALE GENOMIC DNA]</scope>
</reference>
<keyword id="KW-0150">Chloroplast</keyword>
<keyword id="KW-0240">DNA-directed RNA polymerase</keyword>
<keyword id="KW-0479">Metal-binding</keyword>
<keyword id="KW-0548">Nucleotidyltransferase</keyword>
<keyword id="KW-0934">Plastid</keyword>
<keyword id="KW-1185">Reference proteome</keyword>
<keyword id="KW-0804">Transcription</keyword>
<keyword id="KW-0808">Transferase</keyword>
<keyword id="KW-0862">Zinc</keyword>
<feature type="chain" id="PRO_0000067912" description="DNA-directed RNA polymerase subunit beta''">
    <location>
        <begin position="1"/>
        <end position="1373"/>
    </location>
</feature>
<feature type="binding site" evidence="1">
    <location>
        <position position="224"/>
    </location>
    <ligand>
        <name>Zn(2+)</name>
        <dbReference type="ChEBI" id="CHEBI:29105"/>
    </ligand>
</feature>
<feature type="binding site" evidence="1">
    <location>
        <position position="296"/>
    </location>
    <ligand>
        <name>Zn(2+)</name>
        <dbReference type="ChEBI" id="CHEBI:29105"/>
    </ligand>
</feature>
<feature type="binding site" evidence="1">
    <location>
        <position position="303"/>
    </location>
    <ligand>
        <name>Zn(2+)</name>
        <dbReference type="ChEBI" id="CHEBI:29105"/>
    </ligand>
</feature>
<feature type="binding site" evidence="1">
    <location>
        <position position="306"/>
    </location>
    <ligand>
        <name>Zn(2+)</name>
        <dbReference type="ChEBI" id="CHEBI:29105"/>
    </ligand>
</feature>
<accession>P60289</accession>
<organism>
    <name type="scientific">Amborella trichopoda</name>
    <dbReference type="NCBI Taxonomy" id="13333"/>
    <lineage>
        <taxon>Eukaryota</taxon>
        <taxon>Viridiplantae</taxon>
        <taxon>Streptophyta</taxon>
        <taxon>Embryophyta</taxon>
        <taxon>Tracheophyta</taxon>
        <taxon>Spermatophyta</taxon>
        <taxon>Magnoliopsida</taxon>
        <taxon>Amborellales</taxon>
        <taxon>Amborellaceae</taxon>
        <taxon>Amborella</taxon>
    </lineage>
</organism>
<evidence type="ECO:0000255" key="1">
    <source>
        <dbReference type="HAMAP-Rule" id="MF_01324"/>
    </source>
</evidence>
<name>RPOC2_AMBTC</name>
<geneLocation type="chloroplast"/>
<comment type="function">
    <text evidence="1">DNA-dependent RNA polymerase catalyzes the transcription of DNA into RNA using the four ribonucleoside triphosphates as substrates.</text>
</comment>
<comment type="catalytic activity">
    <reaction evidence="1">
        <text>RNA(n) + a ribonucleoside 5'-triphosphate = RNA(n+1) + diphosphate</text>
        <dbReference type="Rhea" id="RHEA:21248"/>
        <dbReference type="Rhea" id="RHEA-COMP:14527"/>
        <dbReference type="Rhea" id="RHEA-COMP:17342"/>
        <dbReference type="ChEBI" id="CHEBI:33019"/>
        <dbReference type="ChEBI" id="CHEBI:61557"/>
        <dbReference type="ChEBI" id="CHEBI:140395"/>
        <dbReference type="EC" id="2.7.7.6"/>
    </reaction>
</comment>
<comment type="cofactor">
    <cofactor evidence="1">
        <name>Zn(2+)</name>
        <dbReference type="ChEBI" id="CHEBI:29105"/>
    </cofactor>
    <text evidence="1">Binds 1 Zn(2+) ion per subunit.</text>
</comment>
<comment type="subunit">
    <text evidence="1">In plastids the minimal PEP RNA polymerase catalytic core is composed of four subunits: alpha, beta, beta', and beta''. When a (nuclear-encoded) sigma factor is associated with the core the holoenzyme is formed, which can initiate transcription.</text>
</comment>
<comment type="subcellular location">
    <subcellularLocation>
        <location evidence="1">Plastid</location>
        <location evidence="1">Chloroplast</location>
    </subcellularLocation>
</comment>
<comment type="similarity">
    <text evidence="1">Belongs to the RNA polymerase beta' chain family. RpoC2 subfamily.</text>
</comment>
<gene>
    <name evidence="1" type="primary">rpoC2</name>
</gene>
<sequence length="1373" mass="156104">MEVLMAERADLVFHNKAIDGTAMKRLISRLIDHFGMAYTSHILDQVKTLGFRQATLTSISLGIDDLLTTPSKGWLVQDAEQQSLILEKHHHYGNVHAVEKLRQSIEIWYATSEYLRQEMNPNFRMTDPFNPVYIMSFSGARGNASQVHQLVGMRGLMSDPQGQMIDLPIQSNLREGLSLTEYTISCYGARKGVVDTAVRTSDAGYLTRRLVEVVQHIVVRRTDCGTIRGISVSPRNGVGVTERIFIQTLIGRVLANDVYMGLRCIATRNQDIGIGLVNRFITSRAQPIYIRSPFTCRSTSWICQLCYGRSTTHGNLVELGEAVGIIAGQSIGEPGTQLTLRTFHTGGVFTGGIAEHVRAPSNGKIKFNEDLVHPTRTRHGHPAFLCHIDLHVTIESQDIIHKVNIPPKSFLLVQNDQYVESEQVIAEIRAGTSTLKERVQKHIYSDSEGEMHWSTDVYHTPEYTHGNVHLLPKTSHLWVLSGSPCRSSIVPFPLHKDQDQMNVQSLYVEERYISDLSMNNDRVRHKLFGWDQKRGRVSYYSGPDRIISNRNWDSIYPLILHENSDLLAKRRRNRFIIPFQYDQEQEKELRPPGIVIKIPIKGILRRNSILAYFDDPRYRRSSSGIAKYGTIEVDSIIKKEDLIEYRKTREFGPKYQIQIKVNRFFFIPEEVHILPRSSSIMVRNNSIIGVDTRITLNIRSQVGGLVRVEKKKKRIELKISSGDIHFPGETDNIARYSGILIPPGRVKNTESKFKNWIYVQRITPIKKKYFVSVRPVVTYEIADGINLATFFPQDLLQEKNNLQLRVVNYILYGDGKPIRGIFHTSIQLVRTCLVLNWDQDRAGSIEEEEAYTSLAEVRVNDLIRNFIRIDLVKSPISSTGKENDMAGSGLIPNNGSDRINTNPFFSKAKTQSLSQHQGTIRTLLNRNKEGQGESLMVLSSSNCSRIGPLNGSKYHNVTKESIQEDPMISIRNSLGPLGTVPNILNFSSSYHSITHNEILFNKYLLPDNSRETFLVPKSYFMDENRRIYNLDPCSNIILTPFNLNWCFLHHDYWEDTSTIISLGQFLCENICISKDGPCVKSGQIIIVHVDSLVIRLAKYHLATRGATVHGHYGEILYEGDTLVTFIYEKSRSGDITQGLPKVEQVLEVRSIDSISMNLEKRVEGWNERITGFLGIPWEFFISAQLTIVQSRISLVNKIQKVYRSQGVQIHNRHIETIVRQITSKVLVSEDGMSNVFSPRELIGLLRAERIGRALEDDICYRAILLGITRASLNTQSFISEASFQETTRVLAKAALRSRIDWLKGLKENVVLGGMIPVGTGFKGFVHHSREHNNISLEIKKKNLFDGKMRDILFYHREFCGSCIPKNFHDTSEQ</sequence>
<dbReference type="EC" id="2.7.7.6" evidence="1"/>
<dbReference type="EMBL" id="AJ506156">
    <property type="protein sequence ID" value="CAD45097.2"/>
    <property type="molecule type" value="Genomic_DNA"/>
</dbReference>
<dbReference type="RefSeq" id="NP_904089.2">
    <property type="nucleotide sequence ID" value="NC_005086.1"/>
</dbReference>
<dbReference type="SMR" id="P60289"/>
<dbReference type="STRING" id="13333.P60289"/>
<dbReference type="GeneID" id="2546586"/>
<dbReference type="KEGG" id="atr:2546586"/>
<dbReference type="OrthoDB" id="498011at2759"/>
<dbReference type="Proteomes" id="UP000017836">
    <property type="component" value="Chloroplast"/>
</dbReference>
<dbReference type="GO" id="GO:0009507">
    <property type="term" value="C:chloroplast"/>
    <property type="evidence" value="ECO:0007669"/>
    <property type="project" value="UniProtKB-SubCell"/>
</dbReference>
<dbReference type="GO" id="GO:0000428">
    <property type="term" value="C:DNA-directed RNA polymerase complex"/>
    <property type="evidence" value="ECO:0007669"/>
    <property type="project" value="UniProtKB-KW"/>
</dbReference>
<dbReference type="GO" id="GO:0005739">
    <property type="term" value="C:mitochondrion"/>
    <property type="evidence" value="ECO:0007669"/>
    <property type="project" value="GOC"/>
</dbReference>
<dbReference type="GO" id="GO:0003677">
    <property type="term" value="F:DNA binding"/>
    <property type="evidence" value="ECO:0007669"/>
    <property type="project" value="UniProtKB-UniRule"/>
</dbReference>
<dbReference type="GO" id="GO:0003899">
    <property type="term" value="F:DNA-directed RNA polymerase activity"/>
    <property type="evidence" value="ECO:0007669"/>
    <property type="project" value="UniProtKB-UniRule"/>
</dbReference>
<dbReference type="GO" id="GO:0008270">
    <property type="term" value="F:zinc ion binding"/>
    <property type="evidence" value="ECO:0007669"/>
    <property type="project" value="UniProtKB-UniRule"/>
</dbReference>
<dbReference type="GO" id="GO:0006351">
    <property type="term" value="P:DNA-templated transcription"/>
    <property type="evidence" value="ECO:0007669"/>
    <property type="project" value="UniProtKB-UniRule"/>
</dbReference>
<dbReference type="CDD" id="cd02655">
    <property type="entry name" value="RNAP_beta'_C"/>
    <property type="match status" value="1"/>
</dbReference>
<dbReference type="FunFam" id="1.10.132.30:FF:000002">
    <property type="entry name" value="DNA-directed RNA polymerase subunit beta"/>
    <property type="match status" value="1"/>
</dbReference>
<dbReference type="Gene3D" id="1.10.132.30">
    <property type="match status" value="1"/>
</dbReference>
<dbReference type="Gene3D" id="1.10.150.390">
    <property type="match status" value="1"/>
</dbReference>
<dbReference type="Gene3D" id="1.10.1790.20">
    <property type="match status" value="1"/>
</dbReference>
<dbReference type="Gene3D" id="1.10.274.100">
    <property type="entry name" value="RNA polymerase Rpb1, domain 3"/>
    <property type="match status" value="1"/>
</dbReference>
<dbReference type="HAMAP" id="MF_01324">
    <property type="entry name" value="RNApol_bact_RpoC2"/>
    <property type="match status" value="1"/>
</dbReference>
<dbReference type="InterPro" id="IPR012756">
    <property type="entry name" value="DNA-dir_RpoC2_beta_pp"/>
</dbReference>
<dbReference type="InterPro" id="IPR050254">
    <property type="entry name" value="RNA_pol_beta''_euk"/>
</dbReference>
<dbReference type="InterPro" id="IPR042102">
    <property type="entry name" value="RNA_pol_Rpb1_3_sf"/>
</dbReference>
<dbReference type="InterPro" id="IPR007083">
    <property type="entry name" value="RNA_pol_Rpb1_4"/>
</dbReference>
<dbReference type="InterPro" id="IPR007081">
    <property type="entry name" value="RNA_pol_Rpb1_5"/>
</dbReference>
<dbReference type="InterPro" id="IPR038120">
    <property type="entry name" value="Rpb1_funnel_sf"/>
</dbReference>
<dbReference type="NCBIfam" id="TIGR02388">
    <property type="entry name" value="rpoC2_cyan"/>
    <property type="match status" value="1"/>
</dbReference>
<dbReference type="PANTHER" id="PTHR34995">
    <property type="entry name" value="DNA-DIRECTED RNA POLYMERASE SUBUNIT BETA"/>
    <property type="match status" value="1"/>
</dbReference>
<dbReference type="PANTHER" id="PTHR34995:SF1">
    <property type="entry name" value="DNA-DIRECTED RNA POLYMERASE SUBUNIT BETA"/>
    <property type="match status" value="1"/>
</dbReference>
<dbReference type="Pfam" id="PF05000">
    <property type="entry name" value="RNA_pol_Rpb1_4"/>
    <property type="match status" value="1"/>
</dbReference>
<dbReference type="Pfam" id="PF04998">
    <property type="entry name" value="RNA_pol_Rpb1_5"/>
    <property type="match status" value="2"/>
</dbReference>
<dbReference type="SUPFAM" id="SSF64484">
    <property type="entry name" value="beta and beta-prime subunits of DNA dependent RNA-polymerase"/>
    <property type="match status" value="1"/>
</dbReference>
<protein>
    <recommendedName>
        <fullName evidence="1">DNA-directed RNA polymerase subunit beta''</fullName>
        <ecNumber evidence="1">2.7.7.6</ecNumber>
    </recommendedName>
    <alternativeName>
        <fullName evidence="1">PEP</fullName>
    </alternativeName>
    <alternativeName>
        <fullName evidence="1">Plastid-encoded RNA polymerase subunit beta''</fullName>
        <shortName evidence="1">RNA polymerase subunit beta''</shortName>
    </alternativeName>
</protein>